<organism>
    <name type="scientific">Rattus norvegicus</name>
    <name type="common">Rat</name>
    <dbReference type="NCBI Taxonomy" id="10116"/>
    <lineage>
        <taxon>Eukaryota</taxon>
        <taxon>Metazoa</taxon>
        <taxon>Chordata</taxon>
        <taxon>Craniata</taxon>
        <taxon>Vertebrata</taxon>
        <taxon>Euteleostomi</taxon>
        <taxon>Mammalia</taxon>
        <taxon>Eutheria</taxon>
        <taxon>Euarchontoglires</taxon>
        <taxon>Glires</taxon>
        <taxon>Rodentia</taxon>
        <taxon>Myomorpha</taxon>
        <taxon>Muroidea</taxon>
        <taxon>Muridae</taxon>
        <taxon>Murinae</taxon>
        <taxon>Rattus</taxon>
    </lineage>
</organism>
<feature type="chain" id="PRO_0000295141" description="Protein FAM221A">
    <location>
        <begin position="1"/>
        <end position="296"/>
    </location>
</feature>
<feature type="region of interest" description="Disordered" evidence="1">
    <location>
        <begin position="235"/>
        <end position="263"/>
    </location>
</feature>
<feature type="compositionally biased region" description="Polar residues" evidence="1">
    <location>
        <begin position="237"/>
        <end position="256"/>
    </location>
</feature>
<accession>Q4V8D7</accession>
<gene>
    <name type="primary">Fam221a</name>
</gene>
<proteinExistence type="evidence at transcript level"/>
<sequence length="296" mass="32904">MERLTLPPGGAQAVDEYLEYRRIVGEDDGGKLFTPEEYEEYKKKVLPMRLQNRLFVSWRSPTGMDCKLVGPETLCFCTHRYKQHKTDFETVPQQRPIDLPCRVTGCQCKAYHYVPLNGTQPIRCRCKHFADQHSPALGFTCNACSKCSGFHSCFTCACGQPAYAHDTVVETRQERLAQGKPVGQDVPYAAMGGLTGFSSLAEGYMRLDDSGIGAPSVDVLDSPVSVMDHPFLRAMQPPSTSSPQPLAVGPSTQISSLRKPEEDDMAYFERQYQERIKMEKAAKKGKALPPPSTQPS</sequence>
<dbReference type="EMBL" id="AABR03032211">
    <property type="status" value="NOT_ANNOTATED_CDS"/>
    <property type="molecule type" value="Genomic_DNA"/>
</dbReference>
<dbReference type="EMBL" id="BC097434">
    <property type="protein sequence ID" value="AAH97434.1"/>
    <property type="molecule type" value="mRNA"/>
</dbReference>
<dbReference type="RefSeq" id="NP_001020942.1">
    <property type="nucleotide sequence ID" value="NM_001025771.2"/>
</dbReference>
<dbReference type="RefSeq" id="XP_017448282.1">
    <property type="nucleotide sequence ID" value="XM_017592793.3"/>
</dbReference>
<dbReference type="FunCoup" id="Q4V8D7">
    <property type="interactions" value="657"/>
</dbReference>
<dbReference type="STRING" id="10116.ENSRNOP00000012677"/>
<dbReference type="PhosphoSitePlus" id="Q4V8D7"/>
<dbReference type="PaxDb" id="10116-ENSRNOP00000012677"/>
<dbReference type="GeneID" id="500118"/>
<dbReference type="KEGG" id="rno:500118"/>
<dbReference type="UCSC" id="RGD:1563175">
    <property type="organism name" value="rat"/>
</dbReference>
<dbReference type="AGR" id="RGD:1563175"/>
<dbReference type="CTD" id="340277"/>
<dbReference type="RGD" id="1563175">
    <property type="gene designation" value="Fam221a"/>
</dbReference>
<dbReference type="VEuPathDB" id="HostDB:ENSRNOG00000009447"/>
<dbReference type="eggNOG" id="ENOG502QR3M">
    <property type="taxonomic scope" value="Eukaryota"/>
</dbReference>
<dbReference type="HOGENOM" id="CLU_080852_0_0_1"/>
<dbReference type="InParanoid" id="Q4V8D7"/>
<dbReference type="OrthoDB" id="40163at9989"/>
<dbReference type="PhylomeDB" id="Q4V8D7"/>
<dbReference type="PRO" id="PR:Q4V8D7"/>
<dbReference type="Proteomes" id="UP000002494">
    <property type="component" value="Chromosome 4"/>
</dbReference>
<dbReference type="Bgee" id="ENSRNOG00000009447">
    <property type="expression patterns" value="Expressed in testis and 15 other cell types or tissues"/>
</dbReference>
<dbReference type="ExpressionAtlas" id="Q4V8D7">
    <property type="expression patterns" value="baseline and differential"/>
</dbReference>
<dbReference type="InterPro" id="IPR026755">
    <property type="entry name" value="Fam221a/b"/>
</dbReference>
<dbReference type="PANTHER" id="PTHR31214:SF2">
    <property type="entry name" value="PROTEIN FAM221A"/>
    <property type="match status" value="1"/>
</dbReference>
<dbReference type="PANTHER" id="PTHR31214">
    <property type="entry name" value="PROTEIN FAM221A-RELATED"/>
    <property type="match status" value="1"/>
</dbReference>
<dbReference type="Pfam" id="PF14753">
    <property type="entry name" value="FAM221"/>
    <property type="match status" value="1"/>
</dbReference>
<protein>
    <recommendedName>
        <fullName>Protein FAM221A</fullName>
    </recommendedName>
</protein>
<keyword id="KW-1185">Reference proteome</keyword>
<evidence type="ECO:0000256" key="1">
    <source>
        <dbReference type="SAM" id="MobiDB-lite"/>
    </source>
</evidence>
<evidence type="ECO:0000305" key="2"/>
<name>F221A_RAT</name>
<comment type="similarity">
    <text evidence="2">Belongs to the FAM221 family.</text>
</comment>
<reference key="1">
    <citation type="journal article" date="2004" name="Nature">
        <title>Genome sequence of the Brown Norway rat yields insights into mammalian evolution.</title>
        <authorList>
            <person name="Gibbs R.A."/>
            <person name="Weinstock G.M."/>
            <person name="Metzker M.L."/>
            <person name="Muzny D.M."/>
            <person name="Sodergren E.J."/>
            <person name="Scherer S."/>
            <person name="Scott G."/>
            <person name="Steffen D."/>
            <person name="Worley K.C."/>
            <person name="Burch P.E."/>
            <person name="Okwuonu G."/>
            <person name="Hines S."/>
            <person name="Lewis L."/>
            <person name="Deramo C."/>
            <person name="Delgado O."/>
            <person name="Dugan-Rocha S."/>
            <person name="Miner G."/>
            <person name="Morgan M."/>
            <person name="Hawes A."/>
            <person name="Gill R."/>
            <person name="Holt R.A."/>
            <person name="Adams M.D."/>
            <person name="Amanatides P.G."/>
            <person name="Baden-Tillson H."/>
            <person name="Barnstead M."/>
            <person name="Chin S."/>
            <person name="Evans C.A."/>
            <person name="Ferriera S."/>
            <person name="Fosler C."/>
            <person name="Glodek A."/>
            <person name="Gu Z."/>
            <person name="Jennings D."/>
            <person name="Kraft C.L."/>
            <person name="Nguyen T."/>
            <person name="Pfannkoch C.M."/>
            <person name="Sitter C."/>
            <person name="Sutton G.G."/>
            <person name="Venter J.C."/>
            <person name="Woodage T."/>
            <person name="Smith D."/>
            <person name="Lee H.-M."/>
            <person name="Gustafson E."/>
            <person name="Cahill P."/>
            <person name="Kana A."/>
            <person name="Doucette-Stamm L."/>
            <person name="Weinstock K."/>
            <person name="Fechtel K."/>
            <person name="Weiss R.B."/>
            <person name="Dunn D.M."/>
            <person name="Green E.D."/>
            <person name="Blakesley R.W."/>
            <person name="Bouffard G.G."/>
            <person name="De Jong P.J."/>
            <person name="Osoegawa K."/>
            <person name="Zhu B."/>
            <person name="Marra M."/>
            <person name="Schein J."/>
            <person name="Bosdet I."/>
            <person name="Fjell C."/>
            <person name="Jones S."/>
            <person name="Krzywinski M."/>
            <person name="Mathewson C."/>
            <person name="Siddiqui A."/>
            <person name="Wye N."/>
            <person name="McPherson J."/>
            <person name="Zhao S."/>
            <person name="Fraser C.M."/>
            <person name="Shetty J."/>
            <person name="Shatsman S."/>
            <person name="Geer K."/>
            <person name="Chen Y."/>
            <person name="Abramzon S."/>
            <person name="Nierman W.C."/>
            <person name="Havlak P.H."/>
            <person name="Chen R."/>
            <person name="Durbin K.J."/>
            <person name="Egan A."/>
            <person name="Ren Y."/>
            <person name="Song X.-Z."/>
            <person name="Li B."/>
            <person name="Liu Y."/>
            <person name="Qin X."/>
            <person name="Cawley S."/>
            <person name="Cooney A.J."/>
            <person name="D'Souza L.M."/>
            <person name="Martin K."/>
            <person name="Wu J.Q."/>
            <person name="Gonzalez-Garay M.L."/>
            <person name="Jackson A.R."/>
            <person name="Kalafus K.J."/>
            <person name="McLeod M.P."/>
            <person name="Milosavljevic A."/>
            <person name="Virk D."/>
            <person name="Volkov A."/>
            <person name="Wheeler D.A."/>
            <person name="Zhang Z."/>
            <person name="Bailey J.A."/>
            <person name="Eichler E.E."/>
            <person name="Tuzun E."/>
            <person name="Birney E."/>
            <person name="Mongin E."/>
            <person name="Ureta-Vidal A."/>
            <person name="Woodwark C."/>
            <person name="Zdobnov E."/>
            <person name="Bork P."/>
            <person name="Suyama M."/>
            <person name="Torrents D."/>
            <person name="Alexandersson M."/>
            <person name="Trask B.J."/>
            <person name="Young J.M."/>
            <person name="Huang H."/>
            <person name="Wang H."/>
            <person name="Xing H."/>
            <person name="Daniels S."/>
            <person name="Gietzen D."/>
            <person name="Schmidt J."/>
            <person name="Stevens K."/>
            <person name="Vitt U."/>
            <person name="Wingrove J."/>
            <person name="Camara F."/>
            <person name="Mar Alba M."/>
            <person name="Abril J.F."/>
            <person name="Guigo R."/>
            <person name="Smit A."/>
            <person name="Dubchak I."/>
            <person name="Rubin E.M."/>
            <person name="Couronne O."/>
            <person name="Poliakov A."/>
            <person name="Huebner N."/>
            <person name="Ganten D."/>
            <person name="Goesele C."/>
            <person name="Hummel O."/>
            <person name="Kreitler T."/>
            <person name="Lee Y.-A."/>
            <person name="Monti J."/>
            <person name="Schulz H."/>
            <person name="Zimdahl H."/>
            <person name="Himmelbauer H."/>
            <person name="Lehrach H."/>
            <person name="Jacob H.J."/>
            <person name="Bromberg S."/>
            <person name="Gullings-Handley J."/>
            <person name="Jensen-Seaman M.I."/>
            <person name="Kwitek A.E."/>
            <person name="Lazar J."/>
            <person name="Pasko D."/>
            <person name="Tonellato P.J."/>
            <person name="Twigger S."/>
            <person name="Ponting C.P."/>
            <person name="Duarte J.M."/>
            <person name="Rice S."/>
            <person name="Goodstadt L."/>
            <person name="Beatson S.A."/>
            <person name="Emes R.D."/>
            <person name="Winter E.E."/>
            <person name="Webber C."/>
            <person name="Brandt P."/>
            <person name="Nyakatura G."/>
            <person name="Adetobi M."/>
            <person name="Chiaromonte F."/>
            <person name="Elnitski L."/>
            <person name="Eswara P."/>
            <person name="Hardison R.C."/>
            <person name="Hou M."/>
            <person name="Kolbe D."/>
            <person name="Makova K."/>
            <person name="Miller W."/>
            <person name="Nekrutenko A."/>
            <person name="Riemer C."/>
            <person name="Schwartz S."/>
            <person name="Taylor J."/>
            <person name="Yang S."/>
            <person name="Zhang Y."/>
            <person name="Lindpaintner K."/>
            <person name="Andrews T.D."/>
            <person name="Caccamo M."/>
            <person name="Clamp M."/>
            <person name="Clarke L."/>
            <person name="Curwen V."/>
            <person name="Durbin R.M."/>
            <person name="Eyras E."/>
            <person name="Searle S.M."/>
            <person name="Cooper G.M."/>
            <person name="Batzoglou S."/>
            <person name="Brudno M."/>
            <person name="Sidow A."/>
            <person name="Stone E.A."/>
            <person name="Payseur B.A."/>
            <person name="Bourque G."/>
            <person name="Lopez-Otin C."/>
            <person name="Puente X.S."/>
            <person name="Chakrabarti K."/>
            <person name="Chatterji S."/>
            <person name="Dewey C."/>
            <person name="Pachter L."/>
            <person name="Bray N."/>
            <person name="Yap V.B."/>
            <person name="Caspi A."/>
            <person name="Tesler G."/>
            <person name="Pevzner P.A."/>
            <person name="Haussler D."/>
            <person name="Roskin K.M."/>
            <person name="Baertsch R."/>
            <person name="Clawson H."/>
            <person name="Furey T.S."/>
            <person name="Hinrichs A.S."/>
            <person name="Karolchik D."/>
            <person name="Kent W.J."/>
            <person name="Rosenbloom K.R."/>
            <person name="Trumbower H."/>
            <person name="Weirauch M."/>
            <person name="Cooper D.N."/>
            <person name="Stenson P.D."/>
            <person name="Ma B."/>
            <person name="Brent M."/>
            <person name="Arumugam M."/>
            <person name="Shteynberg D."/>
            <person name="Copley R.R."/>
            <person name="Taylor M.S."/>
            <person name="Riethman H."/>
            <person name="Mudunuri U."/>
            <person name="Peterson J."/>
            <person name="Guyer M."/>
            <person name="Felsenfeld A."/>
            <person name="Old S."/>
            <person name="Mockrin S."/>
            <person name="Collins F.S."/>
        </authorList>
    </citation>
    <scope>NUCLEOTIDE SEQUENCE [LARGE SCALE GENOMIC DNA]</scope>
    <source>
        <strain>Brown Norway</strain>
    </source>
</reference>
<reference key="2">
    <citation type="journal article" date="2004" name="Genome Res.">
        <title>The status, quality, and expansion of the NIH full-length cDNA project: the Mammalian Gene Collection (MGC).</title>
        <authorList>
            <consortium name="The MGC Project Team"/>
        </authorList>
    </citation>
    <scope>NUCLEOTIDE SEQUENCE [LARGE SCALE MRNA] OF 48-296</scope>
    <source>
        <tissue>Testis</tissue>
    </source>
</reference>